<dbReference type="EMBL" id="CP000653">
    <property type="protein sequence ID" value="ABP59059.1"/>
    <property type="molecule type" value="Genomic_DNA"/>
</dbReference>
<dbReference type="RefSeq" id="WP_011915632.1">
    <property type="nucleotide sequence ID" value="NC_009436.1"/>
</dbReference>
<dbReference type="SMR" id="A4W5S9"/>
<dbReference type="STRING" id="399742.Ent638_0371"/>
<dbReference type="GeneID" id="97184168"/>
<dbReference type="KEGG" id="ent:Ent638_0371"/>
<dbReference type="eggNOG" id="COG0360">
    <property type="taxonomic scope" value="Bacteria"/>
</dbReference>
<dbReference type="HOGENOM" id="CLU_113441_6_1_6"/>
<dbReference type="OrthoDB" id="9812702at2"/>
<dbReference type="Proteomes" id="UP000000230">
    <property type="component" value="Chromosome"/>
</dbReference>
<dbReference type="GO" id="GO:0022627">
    <property type="term" value="C:cytosolic small ribosomal subunit"/>
    <property type="evidence" value="ECO:0007669"/>
    <property type="project" value="TreeGrafter"/>
</dbReference>
<dbReference type="GO" id="GO:0070181">
    <property type="term" value="F:small ribosomal subunit rRNA binding"/>
    <property type="evidence" value="ECO:0007669"/>
    <property type="project" value="TreeGrafter"/>
</dbReference>
<dbReference type="GO" id="GO:0003735">
    <property type="term" value="F:structural constituent of ribosome"/>
    <property type="evidence" value="ECO:0007669"/>
    <property type="project" value="InterPro"/>
</dbReference>
<dbReference type="GO" id="GO:0006412">
    <property type="term" value="P:translation"/>
    <property type="evidence" value="ECO:0007669"/>
    <property type="project" value="UniProtKB-UniRule"/>
</dbReference>
<dbReference type="CDD" id="cd00473">
    <property type="entry name" value="bS6"/>
    <property type="match status" value="1"/>
</dbReference>
<dbReference type="FunFam" id="3.30.70.60:FF:000003">
    <property type="entry name" value="30S ribosomal protein S6"/>
    <property type="match status" value="1"/>
</dbReference>
<dbReference type="Gene3D" id="3.30.70.60">
    <property type="match status" value="1"/>
</dbReference>
<dbReference type="HAMAP" id="MF_00360">
    <property type="entry name" value="Ribosomal_bS6"/>
    <property type="match status" value="1"/>
</dbReference>
<dbReference type="InterPro" id="IPR000529">
    <property type="entry name" value="Ribosomal_bS6"/>
</dbReference>
<dbReference type="InterPro" id="IPR020815">
    <property type="entry name" value="Ribosomal_bS6_CS"/>
</dbReference>
<dbReference type="InterPro" id="IPR035980">
    <property type="entry name" value="Ribosomal_bS6_sf"/>
</dbReference>
<dbReference type="InterPro" id="IPR020814">
    <property type="entry name" value="Ribosomal_S6_plastid/chlpt"/>
</dbReference>
<dbReference type="InterPro" id="IPR014717">
    <property type="entry name" value="Transl_elong_EF1B/ribsomal_bS6"/>
</dbReference>
<dbReference type="NCBIfam" id="TIGR00166">
    <property type="entry name" value="S6"/>
    <property type="match status" value="1"/>
</dbReference>
<dbReference type="PANTHER" id="PTHR21011">
    <property type="entry name" value="MITOCHONDRIAL 28S RIBOSOMAL PROTEIN S6"/>
    <property type="match status" value="1"/>
</dbReference>
<dbReference type="PANTHER" id="PTHR21011:SF1">
    <property type="entry name" value="SMALL RIBOSOMAL SUBUNIT PROTEIN BS6M"/>
    <property type="match status" value="1"/>
</dbReference>
<dbReference type="Pfam" id="PF01250">
    <property type="entry name" value="Ribosomal_S6"/>
    <property type="match status" value="1"/>
</dbReference>
<dbReference type="SUPFAM" id="SSF54995">
    <property type="entry name" value="Ribosomal protein S6"/>
    <property type="match status" value="1"/>
</dbReference>
<dbReference type="PROSITE" id="PS01048">
    <property type="entry name" value="RIBOSOMAL_S6"/>
    <property type="match status" value="1"/>
</dbReference>
<reference key="1">
    <citation type="journal article" date="2010" name="PLoS Genet.">
        <title>Genome sequence of the plant growth promoting endophytic bacterium Enterobacter sp. 638.</title>
        <authorList>
            <person name="Taghavi S."/>
            <person name="van der Lelie D."/>
            <person name="Hoffman A."/>
            <person name="Zhang Y.B."/>
            <person name="Walla M.D."/>
            <person name="Vangronsveld J."/>
            <person name="Newman L."/>
            <person name="Monchy S."/>
        </authorList>
    </citation>
    <scope>NUCLEOTIDE SEQUENCE [LARGE SCALE GENOMIC DNA]</scope>
    <source>
        <strain>638</strain>
    </source>
</reference>
<feature type="chain" id="PRO_1000059857" description="Small ribosomal subunit protein bS6">
    <location>
        <begin position="1"/>
        <end position="131"/>
    </location>
</feature>
<feature type="region of interest" description="Disordered" evidence="2">
    <location>
        <begin position="98"/>
        <end position="131"/>
    </location>
</feature>
<feature type="compositionally biased region" description="Basic and acidic residues" evidence="2">
    <location>
        <begin position="104"/>
        <end position="116"/>
    </location>
</feature>
<feature type="compositionally biased region" description="Acidic residues" evidence="2">
    <location>
        <begin position="120"/>
        <end position="131"/>
    </location>
</feature>
<sequence length="131" mass="15106">MRHYEIVFMVHPDQSEQVPGMIERYTGAITAAEGTIHRLEDWGRRQLAYPINKLHKAHYVLLNVEAPQEAIDELETNFRFNDAVIRSMVMRTKNAVTEASPMVKAKDERRERRDDFANETADDSDAGDSEE</sequence>
<keyword id="KW-0687">Ribonucleoprotein</keyword>
<keyword id="KW-0689">Ribosomal protein</keyword>
<keyword id="KW-0694">RNA-binding</keyword>
<keyword id="KW-0699">rRNA-binding</keyword>
<name>RS6_ENT38</name>
<organism>
    <name type="scientific">Enterobacter sp. (strain 638)</name>
    <dbReference type="NCBI Taxonomy" id="399742"/>
    <lineage>
        <taxon>Bacteria</taxon>
        <taxon>Pseudomonadati</taxon>
        <taxon>Pseudomonadota</taxon>
        <taxon>Gammaproteobacteria</taxon>
        <taxon>Enterobacterales</taxon>
        <taxon>Enterobacteriaceae</taxon>
        <taxon>Enterobacter</taxon>
    </lineage>
</organism>
<accession>A4W5S9</accession>
<evidence type="ECO:0000255" key="1">
    <source>
        <dbReference type="HAMAP-Rule" id="MF_00360"/>
    </source>
</evidence>
<evidence type="ECO:0000256" key="2">
    <source>
        <dbReference type="SAM" id="MobiDB-lite"/>
    </source>
</evidence>
<evidence type="ECO:0000305" key="3"/>
<comment type="function">
    <text evidence="1">Binds together with bS18 to 16S ribosomal RNA.</text>
</comment>
<comment type="similarity">
    <text evidence="1">Belongs to the bacterial ribosomal protein bS6 family.</text>
</comment>
<protein>
    <recommendedName>
        <fullName evidence="1">Small ribosomal subunit protein bS6</fullName>
    </recommendedName>
    <alternativeName>
        <fullName evidence="3">30S ribosomal protein S6</fullName>
    </alternativeName>
</protein>
<gene>
    <name evidence="1" type="primary">rpsF</name>
    <name type="ordered locus">Ent638_0371</name>
</gene>
<proteinExistence type="inferred from homology"/>